<sequence length="205" mass="24375">MKKIFFGLLLVCIFLVFFLFIKKENNVIYNKIVQKSGDTVLIDETYTHLFKDGNLKELVFIKSDFKLSKSEHEKNMNATGYLPDAYRAMRPGYKFDFIFHDNKILGFKSVIFEGFEDAQVSRHENSIPSEKWQKLKDYNIGDPNVNEKFFHLKFPFVVKNTLSVTISKRFFKKIKKLKRLKIILISNEDREYKIDIENFLLKYNL</sequence>
<gene>
    <name type="primary">bptA</name>
    <name type="ordered locus">BGP303</name>
</gene>
<feature type="signal peptide" evidence="2">
    <location>
        <begin position="1"/>
        <end position="23"/>
    </location>
</feature>
<feature type="chain" id="PRO_0000240473" description="Protein BptA">
    <location>
        <begin position="24"/>
        <end position="205"/>
    </location>
</feature>
<keyword id="KW-0998">Cell outer membrane</keyword>
<keyword id="KW-0472">Membrane</keyword>
<keyword id="KW-0614">Plasmid</keyword>
<keyword id="KW-0732">Signal</keyword>
<keyword id="KW-0843">Virulence</keyword>
<protein>
    <recommendedName>
        <fullName>Protein BptA</fullName>
    </recommendedName>
    <alternativeName>
        <fullName>Borrelial persistence in ticks protein A</fullName>
    </alternativeName>
</protein>
<evidence type="ECO:0000250" key="1"/>
<evidence type="ECO:0000255" key="2"/>
<evidence type="ECO:0000305" key="3"/>
<comment type="function">
    <text evidence="1">Virulence-associated protein essential for survival of the bacterium within the tick host and therefore within the natural life cycle of the Lyme disease spirochete.</text>
</comment>
<comment type="subcellular location">
    <subcellularLocation>
        <location evidence="3">Cell outer membrane</location>
    </subcellularLocation>
</comment>
<comment type="similarity">
    <text evidence="3">Belongs to the BptA family.</text>
</comment>
<geneLocation type="plasmid"/>
<name>BPTA_BORGP</name>
<reference key="1">
    <citation type="journal article" date="2004" name="Nucleic Acids Res.">
        <title>Comparative analysis of the Borrelia garinii genome.</title>
        <authorList>
            <person name="Gloeckner G."/>
            <person name="Lehmann R."/>
            <person name="Romualdi A."/>
            <person name="Pradella S."/>
            <person name="Schulte-Spechtel U."/>
            <person name="Schilhabel M."/>
            <person name="Wilske B."/>
            <person name="Suehnel J."/>
            <person name="Platzer M."/>
        </authorList>
    </citation>
    <scope>NUCLEOTIDE SEQUENCE [LARGE SCALE GENOMIC DNA]</scope>
    <source>
        <strain>ATCC BAA-2496 / DSM 23469 / PBi</strain>
    </source>
</reference>
<organism>
    <name type="scientific">Borrelia garinii subsp. bavariensis (strain ATCC BAA-2496 / DSM 23469 / PBi)</name>
    <name type="common">Borreliella bavariensis</name>
    <dbReference type="NCBI Taxonomy" id="290434"/>
    <lineage>
        <taxon>Bacteria</taxon>
        <taxon>Pseudomonadati</taxon>
        <taxon>Spirochaetota</taxon>
        <taxon>Spirochaetia</taxon>
        <taxon>Spirochaetales</taxon>
        <taxon>Borreliaceae</taxon>
        <taxon>Borreliella</taxon>
    </lineage>
</organism>
<dbReference type="EMBL" id="AY722942">
    <property type="protein sequence ID" value="AAU86154.1"/>
    <property type="molecule type" value="Genomic_DNA"/>
</dbReference>
<dbReference type="Proteomes" id="UP000002276">
    <property type="component" value="Plasmid 28"/>
</dbReference>
<dbReference type="GO" id="GO:0009279">
    <property type="term" value="C:cell outer membrane"/>
    <property type="evidence" value="ECO:0007669"/>
    <property type="project" value="UniProtKB-SubCell"/>
</dbReference>
<dbReference type="InterPro" id="IPR031471">
    <property type="entry name" value="BptA"/>
</dbReference>
<dbReference type="NCBIfam" id="NF045772">
    <property type="entry name" value="VirAssocBptA"/>
    <property type="match status" value="1"/>
</dbReference>
<dbReference type="Pfam" id="PF17044">
    <property type="entry name" value="BPTA"/>
    <property type="match status" value="1"/>
</dbReference>
<accession>Q5XYH8</accession>
<proteinExistence type="inferred from homology"/>